<proteinExistence type="evidence at protein level"/>
<accession>P41948</accession>
<accession>D6W140</accession>
<evidence type="ECO:0000255" key="1"/>
<evidence type="ECO:0000256" key="2">
    <source>
        <dbReference type="SAM" id="MobiDB-lite"/>
    </source>
</evidence>
<evidence type="ECO:0000269" key="3">
    <source>
    </source>
</evidence>
<evidence type="ECO:0000269" key="4">
    <source>
    </source>
</evidence>
<evidence type="ECO:0000269" key="5">
    <source>
    </source>
</evidence>
<evidence type="ECO:0000269" key="6">
    <source>
    </source>
</evidence>
<evidence type="ECO:0000269" key="7">
    <source>
    </source>
</evidence>
<evidence type="ECO:0000269" key="8">
    <source>
    </source>
</evidence>
<evidence type="ECO:0000269" key="9">
    <source>
    </source>
</evidence>
<evidence type="ECO:0000269" key="10">
    <source>
    </source>
</evidence>
<evidence type="ECO:0000269" key="11">
    <source>
    </source>
</evidence>
<evidence type="ECO:0000303" key="12">
    <source>
    </source>
</evidence>
<evidence type="ECO:0000305" key="13"/>
<evidence type="ECO:0007744" key="14">
    <source>
        <dbReference type="PDB" id="5AEX"/>
    </source>
</evidence>
<evidence type="ECO:0007829" key="15">
    <source>
        <dbReference type="PDB" id="5AEX"/>
    </source>
</evidence>
<feature type="chain" id="PRO_0000139755" description="Ammonium transporter MEP2">
    <location>
        <begin position="1"/>
        <end position="499"/>
    </location>
</feature>
<feature type="topological domain" description="Extracellular" evidence="3">
    <location>
        <begin position="1"/>
        <end position="31"/>
    </location>
</feature>
<feature type="transmembrane region" description="Helical; Name=1" evidence="1">
    <location>
        <begin position="32"/>
        <end position="52"/>
    </location>
</feature>
<feature type="topological domain" description="Cytoplasmic" evidence="1">
    <location>
        <begin position="53"/>
        <end position="62"/>
    </location>
</feature>
<feature type="transmembrane region" description="Helical; Name=2" evidence="1">
    <location>
        <begin position="63"/>
        <end position="83"/>
    </location>
</feature>
<feature type="topological domain" description="Extracellular" evidence="1">
    <location>
        <begin position="84"/>
        <end position="122"/>
    </location>
</feature>
<feature type="transmembrane region" description="Helical; Name=3" evidence="1">
    <location>
        <begin position="123"/>
        <end position="143"/>
    </location>
</feature>
<feature type="topological domain" description="Cytoplasmic" evidence="1">
    <location>
        <begin position="144"/>
        <end position="152"/>
    </location>
</feature>
<feature type="transmembrane region" description="Helical; Name=4" evidence="1">
    <location>
        <begin position="153"/>
        <end position="173"/>
    </location>
</feature>
<feature type="topological domain" description="Extracellular" evidence="1">
    <location>
        <begin position="174"/>
        <end position="187"/>
    </location>
</feature>
<feature type="transmembrane region" description="Helical; Name=5" evidence="1">
    <location>
        <begin position="188"/>
        <end position="208"/>
    </location>
</feature>
<feature type="topological domain" description="Cytoplasmic" evidence="1">
    <location>
        <begin position="209"/>
        <end position="230"/>
    </location>
</feature>
<feature type="transmembrane region" description="Helical; Name=6" evidence="1">
    <location>
        <begin position="231"/>
        <end position="251"/>
    </location>
</feature>
<feature type="topological domain" description="Extracellular" evidence="1">
    <location>
        <begin position="252"/>
        <end position="257"/>
    </location>
</feature>
<feature type="transmembrane region" description="Helical; Name=7" evidence="1">
    <location>
        <begin position="258"/>
        <end position="278"/>
    </location>
</feature>
<feature type="topological domain" description="Cytoplasmic" evidence="1">
    <location>
        <begin position="279"/>
        <end position="289"/>
    </location>
</feature>
<feature type="transmembrane region" description="Helical; Name=8" evidence="1">
    <location>
        <begin position="290"/>
        <end position="312"/>
    </location>
</feature>
<feature type="topological domain" description="Extracellular" evidence="1">
    <location>
        <begin position="313"/>
        <end position="315"/>
    </location>
</feature>
<feature type="transmembrane region" description="Helical; Name=9" evidence="1">
    <location>
        <begin position="316"/>
        <end position="338"/>
    </location>
</feature>
<feature type="topological domain" description="Cytoplasmic" evidence="1">
    <location>
        <begin position="339"/>
        <end position="346"/>
    </location>
</feature>
<feature type="transmembrane region" description="Helical; Name=10" evidence="1">
    <location>
        <begin position="347"/>
        <end position="367"/>
    </location>
</feature>
<feature type="topological domain" description="Extracellular" evidence="1">
    <location>
        <begin position="368"/>
        <end position="393"/>
    </location>
</feature>
<feature type="transmembrane region" description="Helical; Name=11" evidence="1">
    <location>
        <begin position="394"/>
        <end position="414"/>
    </location>
</feature>
<feature type="topological domain" description="Cytoplasmic" evidence="1">
    <location>
        <begin position="415"/>
        <end position="499"/>
    </location>
</feature>
<feature type="region of interest" description="Enhancer domain" evidence="9">
    <location>
        <begin position="428"/>
        <end position="441"/>
    </location>
</feature>
<feature type="region of interest" description="Linker domain" evidence="9">
    <location>
        <begin position="442"/>
        <end position="449"/>
    </location>
</feature>
<feature type="region of interest" description="Autoinhibitory domain" evidence="9">
    <location>
        <begin position="450"/>
        <end position="485"/>
    </location>
</feature>
<feature type="region of interest" description="Disordered" evidence="2">
    <location>
        <begin position="455"/>
        <end position="499"/>
    </location>
</feature>
<feature type="compositionally biased region" description="Basic and acidic residues" evidence="2">
    <location>
        <begin position="468"/>
        <end position="482"/>
    </location>
</feature>
<feature type="compositionally biased region" description="Polar residues" evidence="2">
    <location>
        <begin position="483"/>
        <end position="493"/>
    </location>
</feature>
<feature type="modified residue" description="Phosphoserine" evidence="7 8 14">
    <location>
        <position position="457"/>
    </location>
</feature>
<feature type="glycosylation site" description="N-linked (GlcNAc...) asparagine" evidence="3">
    <location>
        <position position="4"/>
    </location>
</feature>
<feature type="mutagenesis site" description="Impairs glycosylation." evidence="3">
    <original>N</original>
    <variation>Q</variation>
    <location>
        <position position="4"/>
    </location>
</feature>
<feature type="mutagenesis site" description="Impairs transport activity." evidence="5 6">
    <original>D</original>
    <variation>A</variation>
    <variation>N</variation>
    <location>
        <position position="186"/>
    </location>
</feature>
<feature type="mutagenesis site" description="Decreases the affinity for the substrate." evidence="5">
    <original>D</original>
    <variation>E</variation>
    <location>
        <position position="186"/>
    </location>
</feature>
<feature type="mutagenesis site" description="Preserves transport activity while impairing the filamentation capacity." evidence="6">
    <original>H</original>
    <variation>A</variation>
    <location>
        <position position="194"/>
    </location>
</feature>
<feature type="mutagenesis site" description="Leads to increased competence to acidify the submembrane pH while losing the signaling capability." evidence="9">
    <original>H</original>
    <variation>E</variation>
    <location>
        <position position="194"/>
    </location>
</feature>
<feature type="mutagenesis site" description="Circumvents the requirement of the CTD to enhance substrate trans-location through the hydrophobic core." evidence="9">
    <original>H</original>
    <variation>Y</variation>
    <location>
        <position position="199"/>
    </location>
</feature>
<feature type="mutagenesis site" description="Does not affect glycosylation." evidence="3">
    <original>N</original>
    <variation>Q</variation>
    <location>
        <position position="252"/>
    </location>
</feature>
<feature type="mutagenesis site" description="Preserves transport activity while impairing the filamentation capacity." evidence="6">
    <original>H</original>
    <variation>A</variation>
    <location>
        <position position="348"/>
    </location>
</feature>
<feature type="mutagenesis site" description="Circumvents the requirement of the CTD to enhance substrate trans-location through the hydrophobic core." evidence="9">
    <original>G</original>
    <variation>C</variation>
    <location>
        <position position="349"/>
    </location>
</feature>
<feature type="mutagenesis site" description="Does not affect glycosylation." evidence="3">
    <original>N</original>
    <variation>Q</variation>
    <location>
        <position position="368"/>
    </location>
</feature>
<feature type="mutagenesis site" description="Silences the autoinhibition of MEP2, conferring transport activity even in the absence of the NPR1 kinase." evidence="9">
    <original>S</original>
    <variation>D</variation>
    <location>
        <position position="457"/>
    </location>
</feature>
<feature type="mutagenesis site" description="Does not affect glycosylation." evidence="3">
    <original>N</original>
    <variation>Q</variation>
    <location>
        <position position="483"/>
    </location>
</feature>
<feature type="helix" evidence="15">
    <location>
        <begin position="23"/>
        <end position="26"/>
    </location>
</feature>
<feature type="helix" evidence="15">
    <location>
        <begin position="29"/>
        <end position="43"/>
    </location>
</feature>
<feature type="helix" evidence="15">
    <location>
        <begin position="45"/>
        <end position="55"/>
    </location>
</feature>
<feature type="helix" evidence="15">
    <location>
        <begin position="65"/>
        <end position="82"/>
    </location>
</feature>
<feature type="helix" evidence="15">
    <location>
        <begin position="84"/>
        <end position="89"/>
    </location>
</feature>
<feature type="strand" evidence="15">
    <location>
        <begin position="91"/>
        <end position="100"/>
    </location>
</feature>
<feature type="helix" evidence="15">
    <location>
        <begin position="105"/>
        <end position="107"/>
    </location>
</feature>
<feature type="strand" evidence="15">
    <location>
        <begin position="111"/>
        <end position="114"/>
    </location>
</feature>
<feature type="helix" evidence="15">
    <location>
        <begin position="122"/>
        <end position="142"/>
    </location>
</feature>
<feature type="helix" evidence="15">
    <location>
        <begin position="150"/>
        <end position="163"/>
    </location>
</feature>
<feature type="helix" evidence="15">
    <location>
        <begin position="165"/>
        <end position="172"/>
    </location>
</feature>
<feature type="turn" evidence="15">
    <location>
        <begin position="178"/>
        <end position="183"/>
    </location>
</feature>
<feature type="turn" evidence="15">
    <location>
        <begin position="190"/>
        <end position="193"/>
    </location>
</feature>
<feature type="helix" evidence="15">
    <location>
        <begin position="194"/>
        <end position="207"/>
    </location>
</feature>
<feature type="helix" evidence="15">
    <location>
        <begin position="214"/>
        <end position="216"/>
    </location>
</feature>
<feature type="helix" evidence="15">
    <location>
        <begin position="228"/>
        <end position="247"/>
    </location>
</feature>
<feature type="helix" evidence="15">
    <location>
        <begin position="248"/>
        <end position="250"/>
    </location>
</feature>
<feature type="strand" evidence="15">
    <location>
        <begin position="251"/>
        <end position="254"/>
    </location>
</feature>
<feature type="helix" evidence="15">
    <location>
        <begin position="255"/>
        <end position="282"/>
    </location>
</feature>
<feature type="helix" evidence="15">
    <location>
        <begin position="291"/>
        <end position="302"/>
    </location>
</feature>
<feature type="turn" evidence="15">
    <location>
        <begin position="303"/>
        <end position="309"/>
    </location>
</feature>
<feature type="helix" evidence="15">
    <location>
        <begin position="314"/>
        <end position="330"/>
    </location>
</feature>
<feature type="helix" evidence="15">
    <location>
        <begin position="333"/>
        <end position="336"/>
    </location>
</feature>
<feature type="helix" evidence="15">
    <location>
        <begin position="342"/>
        <end position="362"/>
    </location>
</feature>
<feature type="helix" evidence="15">
    <location>
        <begin position="365"/>
        <end position="368"/>
    </location>
</feature>
<feature type="helix" evidence="15">
    <location>
        <begin position="369"/>
        <end position="374"/>
    </location>
</feature>
<feature type="helix" evidence="15">
    <location>
        <begin position="382"/>
        <end position="384"/>
    </location>
</feature>
<feature type="helix" evidence="15">
    <location>
        <begin position="389"/>
        <end position="415"/>
    </location>
</feature>
<feature type="turn" evidence="15">
    <location>
        <begin position="419"/>
        <end position="421"/>
    </location>
</feature>
<feature type="turn" evidence="15">
    <location>
        <begin position="427"/>
        <end position="429"/>
    </location>
</feature>
<feature type="helix" evidence="15">
    <location>
        <begin position="436"/>
        <end position="438"/>
    </location>
</feature>
<feature type="strand" evidence="15">
    <location>
        <begin position="441"/>
        <end position="444"/>
    </location>
</feature>
<gene>
    <name evidence="12" type="primary">MEP2</name>
    <name type="synonym">AMT2</name>
    <name type="ordered locus">YNL142W</name>
    <name type="ORF">N1207</name>
    <name type="ORF">N1820</name>
</gene>
<protein>
    <recommendedName>
        <fullName evidence="12">Ammonium transporter MEP2</fullName>
    </recommendedName>
</protein>
<comment type="function">
    <text evidence="3 4 5 6 7 8 9 10 11">Transporter for ammonium (both charged and uncharged NH3 and NH4) to use as a nitrogen source (PubMed:11069679, PubMed:11486013, PubMed:16477434, PubMed:18434596, PubMed:24476960, PubMed:27088325, PubMed:9234685, PubMed:9482721). The affinity of MEP2 is about twenty times higher than that of MEP1 (PubMed:9482721). MEP3 has the lowest affinity (PubMed:9482721). Under ammonium limitation acts as an ammonium sensor, generating a signal that leads to pseudohyphal (filamentous) growth (PubMed:11069679, PubMed:16477434, PubMed:18434596, PubMed:32069286, PubMed:9482721).</text>
</comment>
<comment type="biophysicochemical properties">
    <kinetics>
        <KM evidence="5">0.34 mM for methylammonium transport</KM>
        <Vmax evidence="5">18.8 nmol/min/mg enzyme for methylammonium transport</Vmax>
    </kinetics>
</comment>
<comment type="subcellular location">
    <subcellularLocation>
        <location evidence="3 5 6 7 8">Cell membrane</location>
        <topology evidence="8">Multi-pass membrane protein</topology>
    </subcellularLocation>
</comment>
<comment type="domain">
    <text evidence="9">Within the cytoplasmic CTD, an enhancer domain, limited to residues 428-441, upregulates substrate translocation via the MEP2 hydrophobic core, while an autoinhibitory domain, comprised within the 450-485 region and including the NPR1-target serine Ser-457, counteracts the action of the enhancer domain (PubMed:32069286). In between, a linker domain, limited to residues 442-449, appears required for optimal activity when the kinase is present but dispensable when the kinase integrity is altered (PubMed:32069286).</text>
</comment>
<comment type="PTM">
    <text evidence="7 8">Phosphorylated at Ser-457 by the TORC1 effector kinase NPR1 under nitrogen-limiting conditions which causes a conformational change in the C-terminal region (CTR) to form an open active conformation (PubMed:24476960, PubMed:27088325). Supplementation of nitrogen source leads to inactivation and instant Ser-457 dephosphorylation via plasma membrane PSR1 and PSR2 redundant phosphatases (PubMed:24476960).</text>
</comment>
<comment type="PTM">
    <text evidence="3">The residue Asn-4 of the protein's N-terminal tail is the only site that is glycosylated.</text>
</comment>
<comment type="disruption phenotype">
    <text evidence="11">Impairs filamentation induction.</text>
</comment>
<comment type="similarity">
    <text evidence="13">Belongs to the ammonia transporter channel (TC 1.A.11.2) family.</text>
</comment>
<reference key="1">
    <citation type="journal article" date="1997" name="Mol. Cell. Biol.">
        <title>A family of ammonium transporters in Saccharomyces cerevisiae.</title>
        <authorList>
            <person name="Marini A.-M."/>
            <person name="Soussi-Boudekou S."/>
            <person name="Vissers S."/>
            <person name="Andre B."/>
        </authorList>
    </citation>
    <scope>NUCLEOTIDE SEQUENCE [GENOMIC DNA]</scope>
    <scope>FUNCTION</scope>
    <source>
        <strain>Sigma 1278B</strain>
    </source>
</reference>
<reference key="2">
    <citation type="journal article" date="1995" name="Yeast">
        <title>A 43.5 kb segment of yeast chromosome XIV, which contains MFA2, MEP2, CAP/SRV2, NAM9, FKB1/FPR1/RBP1, MOM22 and CPT1, predicts an adenosine deaminase gene and 14 new open reading frames.</title>
        <authorList>
            <person name="Mallet L."/>
            <person name="Bussereau F."/>
            <person name="Jacquet M."/>
        </authorList>
    </citation>
    <scope>NUCLEOTIDE SEQUENCE [GENOMIC DNA]</scope>
    <source>
        <strain>ATCC 204508 / S288c</strain>
    </source>
</reference>
<reference key="3">
    <citation type="journal article" date="1997" name="Nature">
        <title>The nucleotide sequence of Saccharomyces cerevisiae chromosome XIV and its evolutionary implications.</title>
        <authorList>
            <person name="Philippsen P."/>
            <person name="Kleine K."/>
            <person name="Poehlmann R."/>
            <person name="Duesterhoeft A."/>
            <person name="Hamberg K."/>
            <person name="Hegemann J.H."/>
            <person name="Obermaier B."/>
            <person name="Urrestarazu L.A."/>
            <person name="Aert R."/>
            <person name="Albermann K."/>
            <person name="Altmann R."/>
            <person name="Andre B."/>
            <person name="Baladron V."/>
            <person name="Ballesta J.P.G."/>
            <person name="Becam A.-M."/>
            <person name="Beinhauer J.D."/>
            <person name="Boskovic J."/>
            <person name="Buitrago M.J."/>
            <person name="Bussereau F."/>
            <person name="Coster F."/>
            <person name="Crouzet M."/>
            <person name="D'Angelo M."/>
            <person name="Dal Pero F."/>
            <person name="De Antoni A."/>
            <person name="del Rey F."/>
            <person name="Doignon F."/>
            <person name="Domdey H."/>
            <person name="Dubois E."/>
            <person name="Fiedler T.A."/>
            <person name="Fleig U."/>
            <person name="Floeth M."/>
            <person name="Fritz C."/>
            <person name="Gaillardin C."/>
            <person name="Garcia-Cantalejo J.M."/>
            <person name="Glansdorff N."/>
            <person name="Goffeau A."/>
            <person name="Gueldener U."/>
            <person name="Herbert C.J."/>
            <person name="Heumann K."/>
            <person name="Heuss-Neitzel D."/>
            <person name="Hilbert H."/>
            <person name="Hinni K."/>
            <person name="Iraqui Houssaini I."/>
            <person name="Jacquet M."/>
            <person name="Jimenez A."/>
            <person name="Jonniaux J.-L."/>
            <person name="Karpfinger-Hartl L."/>
            <person name="Lanfranchi G."/>
            <person name="Lepingle A."/>
            <person name="Levesque H."/>
            <person name="Lyck R."/>
            <person name="Maftahi M."/>
            <person name="Mallet L."/>
            <person name="Maurer C.T.C."/>
            <person name="Messenguy F."/>
            <person name="Mewes H.-W."/>
            <person name="Moestl D."/>
            <person name="Nasr F."/>
            <person name="Nicaud J.-M."/>
            <person name="Niedenthal R.K."/>
            <person name="Pandolfo D."/>
            <person name="Pierard A."/>
            <person name="Piravandi E."/>
            <person name="Planta R.J."/>
            <person name="Pohl T.M."/>
            <person name="Purnelle B."/>
            <person name="Rebischung C."/>
            <person name="Remacha M.A."/>
            <person name="Revuelta J.L."/>
            <person name="Rinke M."/>
            <person name="Saiz J.E."/>
            <person name="Sartorello F."/>
            <person name="Scherens B."/>
            <person name="Sen-Gupta M."/>
            <person name="Soler-Mira A."/>
            <person name="Urbanus J.H.M."/>
            <person name="Valle G."/>
            <person name="Van Dyck L."/>
            <person name="Verhasselt P."/>
            <person name="Vierendeels F."/>
            <person name="Vissers S."/>
            <person name="Voet M."/>
            <person name="Volckaert G."/>
            <person name="Wach A."/>
            <person name="Wambutt R."/>
            <person name="Wedler H."/>
            <person name="Zollner A."/>
            <person name="Hani J."/>
        </authorList>
    </citation>
    <scope>NUCLEOTIDE SEQUENCE [LARGE SCALE GENOMIC DNA]</scope>
    <source>
        <strain>ATCC 204508 / S288c</strain>
    </source>
</reference>
<reference key="4">
    <citation type="journal article" date="2014" name="G3 (Bethesda)">
        <title>The reference genome sequence of Saccharomyces cerevisiae: Then and now.</title>
        <authorList>
            <person name="Engel S.R."/>
            <person name="Dietrich F.S."/>
            <person name="Fisk D.G."/>
            <person name="Binkley G."/>
            <person name="Balakrishnan R."/>
            <person name="Costanzo M.C."/>
            <person name="Dwight S.S."/>
            <person name="Hitz B.C."/>
            <person name="Karra K."/>
            <person name="Nash R.S."/>
            <person name="Weng S."/>
            <person name="Wong E.D."/>
            <person name="Lloyd P."/>
            <person name="Skrzypek M.S."/>
            <person name="Miyasato S.R."/>
            <person name="Simison M."/>
            <person name="Cherry J.M."/>
        </authorList>
    </citation>
    <scope>GENOME REANNOTATION</scope>
    <source>
        <strain>ATCC 204508 / S288c</strain>
    </source>
</reference>
<reference key="5">
    <citation type="journal article" date="1998" name="EMBO J.">
        <title>The MEP2 ammonium permease regulates pseudohyphal differentiation in Saccharomyces cerevisiae.</title>
        <authorList>
            <person name="Lorenz M.C."/>
            <person name="Heitman J."/>
        </authorList>
    </citation>
    <scope>FUNCTION</scope>
    <scope>DISRUPTION PHENOTYPE</scope>
    <source>
        <strain>Sigma 1278B</strain>
    </source>
</reference>
<reference key="6">
    <citation type="journal article" date="2000" name="Mol. Microbiol.">
        <title>In vivo N-glycosylation of the mep2 high-affinity ammonium transporter of Saccharomyces cerevisiae reveals an extracytosolic N-terminus.</title>
        <authorList>
            <person name="Marini A.-M."/>
            <person name="Andre B."/>
        </authorList>
    </citation>
    <scope>FUNCTION</scope>
    <scope>SUBCELLULAR LOCATION</scope>
    <scope>TOPOLOGY</scope>
    <scope>MUTAGENESIS OF ASN-4; ASN-252; ASN-368 AND ASN-483</scope>
    <scope>GLYCOSYLATION AT ASN-4</scope>
    <source>
        <strain>Sigma 1278B</strain>
    </source>
</reference>
<reference key="7">
    <citation type="journal article" date="2001" name="Mol. Cell. Biol.">
        <title>Evidence that fungal MEP proteins mediate diffusion of the uncharged species NH(3) across the cytoplasmic membrane.</title>
        <authorList>
            <person name="Soupene E."/>
            <person name="Ramirez R.M."/>
            <person name="Kustu S."/>
        </authorList>
    </citation>
    <scope>FUNCTION</scope>
</reference>
<reference key="8">
    <citation type="journal article" date="2006" name="Curr. Genet.">
        <title>Structural involvement in substrate recognition of an essential aspartate residue conserved in Mep/Amt and Rh-type ammonium transporters.</title>
        <authorList>
            <person name="Marini A.-M."/>
            <person name="Boeckstaens M."/>
            <person name="Benjelloun F."/>
            <person name="Cherif-Zahar B."/>
            <person name="Andre B."/>
        </authorList>
    </citation>
    <scope>FUNCTION</scope>
    <scope>MUTAGENESIS OF ASP-186</scope>
    <scope>SUBCELLULAR LOCATION</scope>
    <scope>BIOPHYSICOCHEMICAL PROPERTIES</scope>
</reference>
<reference key="9">
    <citation type="journal article" date="2006" name="Proc. Natl. Acad. Sci. U.S.A.">
        <title>A global topology map of the Saccharomyces cerevisiae membrane proteome.</title>
        <authorList>
            <person name="Kim H."/>
            <person name="Melen K."/>
            <person name="Oesterberg M."/>
            <person name="von Heijne G."/>
        </authorList>
    </citation>
    <scope>TOPOLOGY [LARGE SCALE ANALYSIS]</scope>
    <source>
        <strain>ATCC 208353 / W303-1A</strain>
    </source>
</reference>
<reference key="10">
    <citation type="journal article" date="2008" name="Mol. Biol. Cell">
        <title>A Mep2-dependent transcriptional profile links permease function to gene expression during pseudohyphal growth in Saccharomyces cerevisiae.</title>
        <authorList>
            <person name="Rutherford J.C."/>
            <person name="Chua G."/>
            <person name="Hughes T."/>
            <person name="Cardenas M.E."/>
            <person name="Heitman J."/>
        </authorList>
    </citation>
    <scope>FUNCTION</scope>
    <scope>SUBCELLULAR LOCATION</scope>
    <scope>MUTAGENESIS OF ASP-186; HIS-194 AND HIS-348</scope>
</reference>
<reference key="11">
    <citation type="journal article" date="2014" name="Nat. Commun.">
        <title>The TORC1 effector kinase Npr1 fine tunes the inherent activity of the Mep2 ammonium transport protein.</title>
        <authorList>
            <person name="Boeckstaens M."/>
            <person name="Llinares E."/>
            <person name="Van Vooren P."/>
            <person name="Marini A.M."/>
        </authorList>
    </citation>
    <scope>FUNCTION</scope>
    <scope>PHOSPHORYLATION AT SER-457</scope>
    <scope>SUBCELLULAR LOCATION</scope>
</reference>
<reference key="12">
    <citation type="journal article" date="2020" name="PLoS Genet.">
        <title>Yeast filamentation signaling is connected to a specific substrate translocation mechanism of the Mep2 transceptor.</title>
        <authorList>
            <person name="Brito A.S."/>
            <person name="Neuhaeuser B."/>
            <person name="Wintjens R."/>
            <person name="Marini A.M."/>
            <person name="Boeckstaens M."/>
        </authorList>
    </citation>
    <scope>FUNCTION</scope>
    <scope>MUTAGENESIS OF HIS-194; HIS-199; GLY-349 AND SER-457</scope>
    <scope>DOMAIN</scope>
</reference>
<reference evidence="14" key="13">
    <citation type="journal article" date="2016" name="Nat. Commun.">
        <title>Structural basis for Mep2 ammonium transceptor activation by phosphorylation.</title>
        <authorList>
            <person name="van den Berg B."/>
            <person name="Chembath A."/>
            <person name="Jefferies D."/>
            <person name="Basle A."/>
            <person name="Khalid S."/>
            <person name="Rutherford J.C."/>
        </authorList>
    </citation>
    <scope>X-RAY CRYSTALLOGRAPHY (3.20 ANGSTROMS)</scope>
    <scope>SUBCELLULAR LOCATION</scope>
    <scope>FUNCTION</scope>
    <scope>PHOSPHORYLATION AT SER-457</scope>
</reference>
<keyword id="KW-0002">3D-structure</keyword>
<keyword id="KW-0924">Ammonia transport</keyword>
<keyword id="KW-1003">Cell membrane</keyword>
<keyword id="KW-0325">Glycoprotein</keyword>
<keyword id="KW-0472">Membrane</keyword>
<keyword id="KW-0597">Phosphoprotein</keyword>
<keyword id="KW-1185">Reference proteome</keyword>
<keyword id="KW-0812">Transmembrane</keyword>
<keyword id="KW-1133">Transmembrane helix</keyword>
<keyword id="KW-0813">Transport</keyword>
<sequence length="499" mass="53401">MSYNFTGTPTGEGTGGNSLTTDLNTQFDLANMGWIGVASAGVWIMVPGIGLLYSGLSRKKHALSLLWASMMASAVCIFQWFFWGYSLAFSHNTRGNGFIGTLEFFGFRNVLGAPSSVSSLPDILFAVYQGMFAAVTGALMLGGACERARLFPMMVFLFLWMTIVYCPIACWVWNAEGWLVKLGSLDYAGGLCVHLTSGHGGLVYALILGKRNDPVTRKGMPKYKPHSVTSVVLGTVFLWFGWMFFNGGSAGNATIRAWYSIMSTNLAAACGGLTWMVIDYFRCGRKWTTVGLCSGIIAGLVGITPAAGFVPIWSAVVIGVVTGAGCNLAVDLKSLLRIDDGLDCYSIHGVGGCIGSVLTGIFAADYVNATAGSYISPIDGGWINHHYKQVGYQLAGICAALAWTVTVTSILLLTMNAIPFLKLRLSADEEELGTDAAQIGEFTYEESTAYIPEPIRSKTSAQMPPPHENIDDKIVGNTDAEKNSTPSDASSTKNTDHIV</sequence>
<dbReference type="EMBL" id="X83608">
    <property type="protein sequence ID" value="CAA58587.1"/>
    <property type="molecule type" value="Genomic_DNA"/>
</dbReference>
<dbReference type="EMBL" id="Z46843">
    <property type="protein sequence ID" value="CAA86884.1"/>
    <property type="molecule type" value="Genomic_DNA"/>
</dbReference>
<dbReference type="EMBL" id="Z71418">
    <property type="protein sequence ID" value="CAA96025.1"/>
    <property type="molecule type" value="Genomic_DNA"/>
</dbReference>
<dbReference type="EMBL" id="BK006947">
    <property type="protein sequence ID" value="DAA10406.1"/>
    <property type="molecule type" value="Genomic_DNA"/>
</dbReference>
<dbReference type="PIR" id="S51089">
    <property type="entry name" value="S51089"/>
</dbReference>
<dbReference type="RefSeq" id="NP_014257.1">
    <property type="nucleotide sequence ID" value="NM_001182980.1"/>
</dbReference>
<dbReference type="PDB" id="5AEX">
    <property type="method" value="X-ray"/>
    <property type="resolution" value="3.20 A"/>
    <property type="chains" value="A/B/C/D/E/F/H/I/J=1-499"/>
</dbReference>
<dbReference type="PDBsum" id="5AEX"/>
<dbReference type="SMR" id="P41948"/>
<dbReference type="BioGRID" id="35685">
    <property type="interactions" value="106"/>
</dbReference>
<dbReference type="DIP" id="DIP-4340N"/>
<dbReference type="FunCoup" id="P41948">
    <property type="interactions" value="412"/>
</dbReference>
<dbReference type="IntAct" id="P41948">
    <property type="interactions" value="2"/>
</dbReference>
<dbReference type="STRING" id="4932.YNL142W"/>
<dbReference type="BindingDB" id="P41948"/>
<dbReference type="ChEMBL" id="CHEMBL1741183"/>
<dbReference type="TCDB" id="1.A.11.3.2">
    <property type="family name" value="the ammonium transporter channel (amt) family"/>
</dbReference>
<dbReference type="GlyCosmos" id="P41948">
    <property type="glycosylation" value="1 site, No reported glycans"/>
</dbReference>
<dbReference type="GlyGen" id="P41948">
    <property type="glycosylation" value="1 site"/>
</dbReference>
<dbReference type="iPTMnet" id="P41948"/>
<dbReference type="PaxDb" id="4932-YNL142W"/>
<dbReference type="PeptideAtlas" id="P41948"/>
<dbReference type="EnsemblFungi" id="YNL142W_mRNA">
    <property type="protein sequence ID" value="YNL142W"/>
    <property type="gene ID" value="YNL142W"/>
</dbReference>
<dbReference type="GeneID" id="855580"/>
<dbReference type="KEGG" id="sce:YNL142W"/>
<dbReference type="AGR" id="SGD:S000005086"/>
<dbReference type="SGD" id="S000005086">
    <property type="gene designation" value="MEP2"/>
</dbReference>
<dbReference type="VEuPathDB" id="FungiDB:YNL142W"/>
<dbReference type="eggNOG" id="KOG0682">
    <property type="taxonomic scope" value="Eukaryota"/>
</dbReference>
<dbReference type="GeneTree" id="ENSGT00530000064546"/>
<dbReference type="HOGENOM" id="CLU_000445_33_0_1"/>
<dbReference type="InParanoid" id="P41948"/>
<dbReference type="OMA" id="NVMMKNM"/>
<dbReference type="OrthoDB" id="534912at2759"/>
<dbReference type="BioCyc" id="YEAST:G3O-33160-MONOMER"/>
<dbReference type="BioGRID-ORCS" id="855580">
    <property type="hits" value="1 hit in 10 CRISPR screens"/>
</dbReference>
<dbReference type="EvolutionaryTrace" id="P41948"/>
<dbReference type="PRO" id="PR:P41948"/>
<dbReference type="Proteomes" id="UP000002311">
    <property type="component" value="Chromosome XIV"/>
</dbReference>
<dbReference type="RNAct" id="P41948">
    <property type="molecule type" value="protein"/>
</dbReference>
<dbReference type="GO" id="GO:0005886">
    <property type="term" value="C:plasma membrane"/>
    <property type="evidence" value="ECO:0000314"/>
    <property type="project" value="SGD"/>
</dbReference>
<dbReference type="GO" id="GO:0008519">
    <property type="term" value="F:ammonium channel activity"/>
    <property type="evidence" value="ECO:0000314"/>
    <property type="project" value="SGD"/>
</dbReference>
<dbReference type="GO" id="GO:0072488">
    <property type="term" value="P:ammonium transmembrane transport"/>
    <property type="evidence" value="ECO:0000315"/>
    <property type="project" value="SGD"/>
</dbReference>
<dbReference type="GO" id="GO:0019740">
    <property type="term" value="P:nitrogen utilization"/>
    <property type="evidence" value="ECO:0000315"/>
    <property type="project" value="SGD"/>
</dbReference>
<dbReference type="GO" id="GO:1900430">
    <property type="term" value="P:positive regulation of filamentous growth of a population of unicellular organisms"/>
    <property type="evidence" value="ECO:0000315"/>
    <property type="project" value="SGD"/>
</dbReference>
<dbReference type="GO" id="GO:0007124">
    <property type="term" value="P:pseudohyphal growth"/>
    <property type="evidence" value="ECO:0000315"/>
    <property type="project" value="SGD"/>
</dbReference>
<dbReference type="FunFam" id="1.10.3430.10:FF:000003">
    <property type="entry name" value="Ammonium transporter"/>
    <property type="match status" value="1"/>
</dbReference>
<dbReference type="Gene3D" id="1.10.3430.10">
    <property type="entry name" value="Ammonium transporter AmtB like domains"/>
    <property type="match status" value="1"/>
</dbReference>
<dbReference type="InterPro" id="IPR029020">
    <property type="entry name" value="Ammonium/urea_transptr"/>
</dbReference>
<dbReference type="InterPro" id="IPR001905">
    <property type="entry name" value="Ammonium_transpt"/>
</dbReference>
<dbReference type="InterPro" id="IPR018047">
    <property type="entry name" value="Ammonium_transpt_CS"/>
</dbReference>
<dbReference type="InterPro" id="IPR024041">
    <property type="entry name" value="NH4_transpt_AmtB-like_dom"/>
</dbReference>
<dbReference type="NCBIfam" id="TIGR00836">
    <property type="entry name" value="amt"/>
    <property type="match status" value="1"/>
</dbReference>
<dbReference type="PANTHER" id="PTHR43029">
    <property type="entry name" value="AMMONIUM TRANSPORTER MEP2"/>
    <property type="match status" value="1"/>
</dbReference>
<dbReference type="PANTHER" id="PTHR43029:SF10">
    <property type="entry name" value="AMMONIUM TRANSPORTER MEP2"/>
    <property type="match status" value="1"/>
</dbReference>
<dbReference type="Pfam" id="PF00909">
    <property type="entry name" value="Ammonium_transp"/>
    <property type="match status" value="1"/>
</dbReference>
<dbReference type="SUPFAM" id="SSF111352">
    <property type="entry name" value="Ammonium transporter"/>
    <property type="match status" value="1"/>
</dbReference>
<dbReference type="PROSITE" id="PS01219">
    <property type="entry name" value="AMMONIUM_TRANSP"/>
    <property type="match status" value="1"/>
</dbReference>
<name>MEP2_YEAST</name>
<organism>
    <name type="scientific">Saccharomyces cerevisiae (strain ATCC 204508 / S288c)</name>
    <name type="common">Baker's yeast</name>
    <dbReference type="NCBI Taxonomy" id="559292"/>
    <lineage>
        <taxon>Eukaryota</taxon>
        <taxon>Fungi</taxon>
        <taxon>Dikarya</taxon>
        <taxon>Ascomycota</taxon>
        <taxon>Saccharomycotina</taxon>
        <taxon>Saccharomycetes</taxon>
        <taxon>Saccharomycetales</taxon>
        <taxon>Saccharomycetaceae</taxon>
        <taxon>Saccharomyces</taxon>
    </lineage>
</organism>